<gene>
    <name type="primary">esxA</name>
    <name type="synonym">esaT6</name>
    <name type="ordered locus">BQ2027_MB3905</name>
</gene>
<proteinExistence type="inferred from homology"/>
<organism>
    <name type="scientific">Mycobacterium bovis (strain ATCC BAA-935 / AF2122/97)</name>
    <dbReference type="NCBI Taxonomy" id="233413"/>
    <lineage>
        <taxon>Bacteria</taxon>
        <taxon>Bacillati</taxon>
        <taxon>Actinomycetota</taxon>
        <taxon>Actinomycetes</taxon>
        <taxon>Mycobacteriales</taxon>
        <taxon>Mycobacteriaceae</taxon>
        <taxon>Mycobacterium</taxon>
        <taxon>Mycobacterium tuberculosis complex</taxon>
    </lineage>
</organism>
<keyword id="KW-0175">Coiled coil</keyword>
<keyword id="KW-1043">Host membrane</keyword>
<keyword id="KW-0472">Membrane</keyword>
<keyword id="KW-1185">Reference proteome</keyword>
<keyword id="KW-0964">Secreted</keyword>
<keyword id="KW-0812">Transmembrane</keyword>
<keyword id="KW-1133">Transmembrane helix</keyword>
<keyword id="KW-0843">Virulence</keyword>
<comment type="function">
    <text evidence="2">A secreted protein. Acts as a strong host T-cell antigen. Plays a number of roles in modulating the host's immune response to infection as well as being responsible for bacterial escape into the host cytoplasm.</text>
</comment>
<comment type="subunit">
    <text evidence="2">Forms a tight 1:1 complex with EsxB (CFP-10).</text>
</comment>
<comment type="subcellular location">
    <subcellularLocation>
        <location evidence="2">Secreted</location>
    </subcellularLocation>
    <subcellularLocation>
        <location evidence="2">Host membrane</location>
    </subcellularLocation>
    <text evidence="2">Probably secreted via the ESX-1 / type VII secretion system (T7SS). A central pair of alpha helices probably insert into host membrane.</text>
</comment>
<comment type="miscellaneous">
    <text evidence="5">Genes esxA and esxB are part of RD1 (part of a 15-gene locus known as ESX-1), a section of DNA deleted in the M.bovis BCG strain used for vaccination. Deletion of this region is thought to be largely responsible for the attenuation of BCG, and esxA and esxB in particular are very important in this effect (PubMed:8631702).</text>
</comment>
<comment type="similarity">
    <text evidence="4">Belongs to the WXG100 family. ESAT-6 subfamily.</text>
</comment>
<feature type="initiator methionine" description="Removed" evidence="1">
    <location>
        <position position="1"/>
    </location>
</feature>
<feature type="chain" id="PRO_0000167791" description="6 kDa early secretory antigenic target">
    <location>
        <begin position="2"/>
        <end position="95"/>
    </location>
</feature>
<feature type="transmembrane region" description="Helical" evidence="4">
    <location>
        <begin position="11"/>
        <end position="43"/>
    </location>
</feature>
<feature type="transmembrane region" description="Helical" evidence="4">
    <location>
        <begin position="49"/>
        <end position="85"/>
    </location>
</feature>
<feature type="coiled-coil region" evidence="3">
    <location>
        <begin position="56"/>
        <end position="87"/>
    </location>
</feature>
<evidence type="ECO:0000250" key="1"/>
<evidence type="ECO:0000250" key="2">
    <source>
        <dbReference type="UniProtKB" id="P9WNK7"/>
    </source>
</evidence>
<evidence type="ECO:0000255" key="3"/>
<evidence type="ECO:0000305" key="4"/>
<evidence type="ECO:0000305" key="5">
    <source>
    </source>
</evidence>
<reference key="1">
    <citation type="journal article" date="1996" name="J. Bacteriol.">
        <title>Molecular analysis of genetic differences between Mycobacterium bovis BCG and virulent M. bovis.</title>
        <authorList>
            <person name="Mahairas G.G."/>
            <person name="Sabo P.J."/>
            <person name="Hickey M.J."/>
            <person name="Singh D.C."/>
            <person name="Stover C.K."/>
        </authorList>
    </citation>
    <scope>NUCLEOTIDE SEQUENCE [GENOMIC DNA]</scope>
</reference>
<reference key="2">
    <citation type="journal article" date="2003" name="Proc. Natl. Acad. Sci. U.S.A.">
        <title>The complete genome sequence of Mycobacterium bovis.</title>
        <authorList>
            <person name="Garnier T."/>
            <person name="Eiglmeier K."/>
            <person name="Camus J.-C."/>
            <person name="Medina N."/>
            <person name="Mansoor H."/>
            <person name="Pryor M."/>
            <person name="Duthoy S."/>
            <person name="Grondin S."/>
            <person name="Lacroix C."/>
            <person name="Monsempe C."/>
            <person name="Simon S."/>
            <person name="Harris B."/>
            <person name="Atkin R."/>
            <person name="Doggett J."/>
            <person name="Mayes R."/>
            <person name="Keating L."/>
            <person name="Wheeler P.R."/>
            <person name="Parkhill J."/>
            <person name="Barrell B.G."/>
            <person name="Cole S.T."/>
            <person name="Gordon S.V."/>
            <person name="Hewinson R.G."/>
        </authorList>
    </citation>
    <scope>NUCLEOTIDE SEQUENCE [LARGE SCALE GENOMIC DNA]</scope>
    <source>
        <strain>ATCC BAA-935 / AF2122/97</strain>
    </source>
</reference>
<reference key="3">
    <citation type="journal article" date="2017" name="Genome Announc.">
        <title>Updated reference genome sequence and annotation of Mycobacterium bovis AF2122/97.</title>
        <authorList>
            <person name="Malone K.M."/>
            <person name="Farrell D."/>
            <person name="Stuber T.P."/>
            <person name="Schubert O.T."/>
            <person name="Aebersold R."/>
            <person name="Robbe-Austerman S."/>
            <person name="Gordon S.V."/>
        </authorList>
    </citation>
    <scope>NUCLEOTIDE SEQUENCE [LARGE SCALE GENOMIC DNA]</scope>
    <scope>GENOME REANNOTATION</scope>
    <source>
        <strain>ATCC BAA-935 / AF2122/97</strain>
    </source>
</reference>
<protein>
    <recommendedName>
        <fullName>6 kDa early secretory antigenic target</fullName>
    </recommendedName>
    <alternativeName>
        <fullName>ESAT-6</fullName>
    </alternativeName>
</protein>
<sequence>MTEQQWNFAGIEAAASAIQGNVTSIHSLLDEGKQSLTKLAAAWGGSGSEAYQGVQQKWDATATELNNALQNLARTISEAGQAMASTEGNVTGMFA</sequence>
<name>ESXA_MYCBO</name>
<dbReference type="EMBL" id="U34848">
    <property type="protein sequence ID" value="AAC44033.1"/>
    <property type="molecule type" value="Genomic_DNA"/>
</dbReference>
<dbReference type="EMBL" id="LT708304">
    <property type="protein sequence ID" value="SIU02537.1"/>
    <property type="molecule type" value="Genomic_DNA"/>
</dbReference>
<dbReference type="RefSeq" id="NP_857542.1">
    <property type="nucleotide sequence ID" value="NC_002945.3"/>
</dbReference>
<dbReference type="RefSeq" id="WP_003399963.1">
    <property type="nucleotide sequence ID" value="NC_002945.4"/>
</dbReference>
<dbReference type="BMRB" id="P0A565"/>
<dbReference type="SMR" id="P0A565"/>
<dbReference type="GeneID" id="45427879"/>
<dbReference type="KEGG" id="mbo:BQ2027_MB3905"/>
<dbReference type="PATRIC" id="fig|233413.5.peg.4278"/>
<dbReference type="Proteomes" id="UP000001419">
    <property type="component" value="Chromosome"/>
</dbReference>
<dbReference type="GO" id="GO:0005576">
    <property type="term" value="C:extracellular region"/>
    <property type="evidence" value="ECO:0007669"/>
    <property type="project" value="UniProtKB-SubCell"/>
</dbReference>
<dbReference type="GO" id="GO:0033644">
    <property type="term" value="C:host cell membrane"/>
    <property type="evidence" value="ECO:0007669"/>
    <property type="project" value="UniProtKB-SubCell"/>
</dbReference>
<dbReference type="GO" id="GO:0016020">
    <property type="term" value="C:membrane"/>
    <property type="evidence" value="ECO:0007669"/>
    <property type="project" value="UniProtKB-KW"/>
</dbReference>
<dbReference type="FunFam" id="1.10.287.1060:FF:000009">
    <property type="entry name" value="ESAT-6-like protein"/>
    <property type="match status" value="1"/>
</dbReference>
<dbReference type="Gene3D" id="1.10.287.1060">
    <property type="entry name" value="ESAT-6-like"/>
    <property type="match status" value="1"/>
</dbReference>
<dbReference type="InterPro" id="IPR036689">
    <property type="entry name" value="ESAT-6-like_sf"/>
</dbReference>
<dbReference type="InterPro" id="IPR010310">
    <property type="entry name" value="T7SS_ESAT-6-like"/>
</dbReference>
<dbReference type="NCBIfam" id="TIGR03930">
    <property type="entry name" value="WXG100_ESAT6"/>
    <property type="match status" value="1"/>
</dbReference>
<dbReference type="Pfam" id="PF06013">
    <property type="entry name" value="WXG100"/>
    <property type="match status" value="1"/>
</dbReference>
<dbReference type="SUPFAM" id="SSF140453">
    <property type="entry name" value="EsxAB dimer-like"/>
    <property type="match status" value="1"/>
</dbReference>
<accession>P0A565</accession>
<accession>A0A1R3Y5H8</accession>
<accession>O84901</accession>
<accession>Q57165</accession>
<accession>X2BPJ5</accession>